<sequence length="354" mass="39274">MLKLFLSTPRTLPNSRFLLLRRLQPLGLRYRSDASSLHLFTPTWRDHATNTIIKFVPQQVAYVVERMGRFSRILTPGVAFLAPIIDKIAYIHSLKERALEIPTQSAITLDNVSLGLDGVLYIQVYDPYKASYGVEDADYAISQLAQTTMRSEIGRLTLDHVLRERQSLNIHITDAINKAAESWGIRCLRHEIRDIRPPESVVMAMHQQVSAERQKRAEILESEGKRQAAINVAEGDKQAEILDSEGQKIKTINSALAEAQAIREKASATASGIAVLADSIKKQEHGLEAVSLYIAQQYITNFGKLAKASNSMIVPASTSDVSGMVAQALSIFKQVSKTTAPDKSTPKELHTDEK</sequence>
<accession>O60121</accession>
<evidence type="ECO:0000269" key="1">
    <source>
    </source>
</evidence>
<evidence type="ECO:0000305" key="2"/>
<feature type="chain" id="PRO_0000316209" description="Uncharacterized protein C16G5.07c">
    <location>
        <begin position="1"/>
        <end position="354"/>
    </location>
</feature>
<dbReference type="EMBL" id="CU329671">
    <property type="protein sequence ID" value="CAA19027.1"/>
    <property type="molecule type" value="Genomic_DNA"/>
</dbReference>
<dbReference type="PIR" id="T39599">
    <property type="entry name" value="T39599"/>
</dbReference>
<dbReference type="RefSeq" id="NP_596756.1">
    <property type="nucleotide sequence ID" value="NM_001023776.2"/>
</dbReference>
<dbReference type="SMR" id="O60121"/>
<dbReference type="BioGRID" id="276423">
    <property type="interactions" value="6"/>
</dbReference>
<dbReference type="FunCoup" id="O60121">
    <property type="interactions" value="571"/>
</dbReference>
<dbReference type="STRING" id="284812.O60121"/>
<dbReference type="PaxDb" id="4896-SPBC16G5.07c.1"/>
<dbReference type="EnsemblFungi" id="SPBC16G5.07c.1">
    <property type="protein sequence ID" value="SPBC16G5.07c.1:pep"/>
    <property type="gene ID" value="SPBC16G5.07c"/>
</dbReference>
<dbReference type="KEGG" id="spo:2539877"/>
<dbReference type="PomBase" id="SPBC16G5.07c"/>
<dbReference type="VEuPathDB" id="FungiDB:SPBC16G5.07c"/>
<dbReference type="eggNOG" id="KOG2620">
    <property type="taxonomic scope" value="Eukaryota"/>
</dbReference>
<dbReference type="HOGENOM" id="CLU_024949_2_2_1"/>
<dbReference type="InParanoid" id="O60121"/>
<dbReference type="OMA" id="YLQMLPK"/>
<dbReference type="PhylomeDB" id="O60121"/>
<dbReference type="PRO" id="PR:O60121"/>
<dbReference type="Proteomes" id="UP000002485">
    <property type="component" value="Chromosome II"/>
</dbReference>
<dbReference type="GO" id="GO:0005743">
    <property type="term" value="C:mitochondrial inner membrane"/>
    <property type="evidence" value="ECO:0000266"/>
    <property type="project" value="PomBase"/>
</dbReference>
<dbReference type="GO" id="GO:0005739">
    <property type="term" value="C:mitochondrion"/>
    <property type="evidence" value="ECO:0007005"/>
    <property type="project" value="PomBase"/>
</dbReference>
<dbReference type="GO" id="GO:0007006">
    <property type="term" value="P:mitochondrial membrane organization"/>
    <property type="evidence" value="ECO:0000250"/>
    <property type="project" value="PomBase"/>
</dbReference>
<dbReference type="GO" id="GO:0007005">
    <property type="term" value="P:mitochondrion organization"/>
    <property type="evidence" value="ECO:0000318"/>
    <property type="project" value="GO_Central"/>
</dbReference>
<dbReference type="CDD" id="cd08829">
    <property type="entry name" value="SPFH_paraslipin"/>
    <property type="match status" value="1"/>
</dbReference>
<dbReference type="FunFam" id="3.30.479.30:FF:000008">
    <property type="entry name" value="Stomatin-like protein 2, mitochondrial"/>
    <property type="match status" value="1"/>
</dbReference>
<dbReference type="Gene3D" id="3.30.479.30">
    <property type="entry name" value="Band 7 domain"/>
    <property type="match status" value="1"/>
</dbReference>
<dbReference type="InterPro" id="IPR050710">
    <property type="entry name" value="Band7/mec-2_domain"/>
</dbReference>
<dbReference type="InterPro" id="IPR001107">
    <property type="entry name" value="Band_7"/>
</dbReference>
<dbReference type="InterPro" id="IPR036013">
    <property type="entry name" value="Band_7/SPFH_dom_sf"/>
</dbReference>
<dbReference type="InterPro" id="IPR032435">
    <property type="entry name" value="STML2-like_C"/>
</dbReference>
<dbReference type="InterPro" id="IPR001972">
    <property type="entry name" value="Stomatin_HflK_fam"/>
</dbReference>
<dbReference type="PANTHER" id="PTHR43327">
    <property type="entry name" value="STOMATIN-LIKE PROTEIN 2, MITOCHONDRIAL"/>
    <property type="match status" value="1"/>
</dbReference>
<dbReference type="PANTHER" id="PTHR43327:SF10">
    <property type="entry name" value="STOMATIN-LIKE PROTEIN 2, MITOCHONDRIAL"/>
    <property type="match status" value="1"/>
</dbReference>
<dbReference type="Pfam" id="PF01145">
    <property type="entry name" value="Band_7"/>
    <property type="match status" value="1"/>
</dbReference>
<dbReference type="Pfam" id="PF16200">
    <property type="entry name" value="Band_7_C"/>
    <property type="match status" value="1"/>
</dbReference>
<dbReference type="PRINTS" id="PR00721">
    <property type="entry name" value="STOMATIN"/>
</dbReference>
<dbReference type="SMART" id="SM00244">
    <property type="entry name" value="PHB"/>
    <property type="match status" value="1"/>
</dbReference>
<dbReference type="SUPFAM" id="SSF117892">
    <property type="entry name" value="Band 7/SPFH domain"/>
    <property type="match status" value="1"/>
</dbReference>
<name>YH77_SCHPO</name>
<reference key="1">
    <citation type="journal article" date="2002" name="Nature">
        <title>The genome sequence of Schizosaccharomyces pombe.</title>
        <authorList>
            <person name="Wood V."/>
            <person name="Gwilliam R."/>
            <person name="Rajandream M.A."/>
            <person name="Lyne M.H."/>
            <person name="Lyne R."/>
            <person name="Stewart A."/>
            <person name="Sgouros J.G."/>
            <person name="Peat N."/>
            <person name="Hayles J."/>
            <person name="Baker S.G."/>
            <person name="Basham D."/>
            <person name="Bowman S."/>
            <person name="Brooks K."/>
            <person name="Brown D."/>
            <person name="Brown S."/>
            <person name="Chillingworth T."/>
            <person name="Churcher C.M."/>
            <person name="Collins M."/>
            <person name="Connor R."/>
            <person name="Cronin A."/>
            <person name="Davis P."/>
            <person name="Feltwell T."/>
            <person name="Fraser A."/>
            <person name="Gentles S."/>
            <person name="Goble A."/>
            <person name="Hamlin N."/>
            <person name="Harris D.E."/>
            <person name="Hidalgo J."/>
            <person name="Hodgson G."/>
            <person name="Holroyd S."/>
            <person name="Hornsby T."/>
            <person name="Howarth S."/>
            <person name="Huckle E.J."/>
            <person name="Hunt S."/>
            <person name="Jagels K."/>
            <person name="James K.D."/>
            <person name="Jones L."/>
            <person name="Jones M."/>
            <person name="Leather S."/>
            <person name="McDonald S."/>
            <person name="McLean J."/>
            <person name="Mooney P."/>
            <person name="Moule S."/>
            <person name="Mungall K.L."/>
            <person name="Murphy L.D."/>
            <person name="Niblett D."/>
            <person name="Odell C."/>
            <person name="Oliver K."/>
            <person name="O'Neil S."/>
            <person name="Pearson D."/>
            <person name="Quail M.A."/>
            <person name="Rabbinowitsch E."/>
            <person name="Rutherford K.M."/>
            <person name="Rutter S."/>
            <person name="Saunders D."/>
            <person name="Seeger K."/>
            <person name="Sharp S."/>
            <person name="Skelton J."/>
            <person name="Simmonds M.N."/>
            <person name="Squares R."/>
            <person name="Squares S."/>
            <person name="Stevens K."/>
            <person name="Taylor K."/>
            <person name="Taylor R.G."/>
            <person name="Tivey A."/>
            <person name="Walsh S.V."/>
            <person name="Warren T."/>
            <person name="Whitehead S."/>
            <person name="Woodward J.R."/>
            <person name="Volckaert G."/>
            <person name="Aert R."/>
            <person name="Robben J."/>
            <person name="Grymonprez B."/>
            <person name="Weltjens I."/>
            <person name="Vanstreels E."/>
            <person name="Rieger M."/>
            <person name="Schaefer M."/>
            <person name="Mueller-Auer S."/>
            <person name="Gabel C."/>
            <person name="Fuchs M."/>
            <person name="Duesterhoeft A."/>
            <person name="Fritzc C."/>
            <person name="Holzer E."/>
            <person name="Moestl D."/>
            <person name="Hilbert H."/>
            <person name="Borzym K."/>
            <person name="Langer I."/>
            <person name="Beck A."/>
            <person name="Lehrach H."/>
            <person name="Reinhardt R."/>
            <person name="Pohl T.M."/>
            <person name="Eger P."/>
            <person name="Zimmermann W."/>
            <person name="Wedler H."/>
            <person name="Wambutt R."/>
            <person name="Purnelle B."/>
            <person name="Goffeau A."/>
            <person name="Cadieu E."/>
            <person name="Dreano S."/>
            <person name="Gloux S."/>
            <person name="Lelaure V."/>
            <person name="Mottier S."/>
            <person name="Galibert F."/>
            <person name="Aves S.J."/>
            <person name="Xiang Z."/>
            <person name="Hunt C."/>
            <person name="Moore K."/>
            <person name="Hurst S.M."/>
            <person name="Lucas M."/>
            <person name="Rochet M."/>
            <person name="Gaillardin C."/>
            <person name="Tallada V.A."/>
            <person name="Garzon A."/>
            <person name="Thode G."/>
            <person name="Daga R.R."/>
            <person name="Cruzado L."/>
            <person name="Jimenez J."/>
            <person name="Sanchez M."/>
            <person name="del Rey F."/>
            <person name="Benito J."/>
            <person name="Dominguez A."/>
            <person name="Revuelta J.L."/>
            <person name="Moreno S."/>
            <person name="Armstrong J."/>
            <person name="Forsburg S.L."/>
            <person name="Cerutti L."/>
            <person name="Lowe T."/>
            <person name="McCombie W.R."/>
            <person name="Paulsen I."/>
            <person name="Potashkin J."/>
            <person name="Shpakovski G.V."/>
            <person name="Ussery D."/>
            <person name="Barrell B.G."/>
            <person name="Nurse P."/>
        </authorList>
    </citation>
    <scope>NUCLEOTIDE SEQUENCE [LARGE SCALE GENOMIC DNA]</scope>
    <source>
        <strain>972 / ATCC 24843</strain>
    </source>
</reference>
<reference key="2">
    <citation type="journal article" date="2006" name="Nat. Biotechnol.">
        <title>ORFeome cloning and global analysis of protein localization in the fission yeast Schizosaccharomyces pombe.</title>
        <authorList>
            <person name="Matsuyama A."/>
            <person name="Arai R."/>
            <person name="Yashiroda Y."/>
            <person name="Shirai A."/>
            <person name="Kamata A."/>
            <person name="Sekido S."/>
            <person name="Kobayashi Y."/>
            <person name="Hashimoto A."/>
            <person name="Hamamoto M."/>
            <person name="Hiraoka Y."/>
            <person name="Horinouchi S."/>
            <person name="Yoshida M."/>
        </authorList>
    </citation>
    <scope>SUBCELLULAR LOCATION [LARGE SCALE ANALYSIS]</scope>
</reference>
<keyword id="KW-0496">Mitochondrion</keyword>
<keyword id="KW-1185">Reference proteome</keyword>
<gene>
    <name type="ORF">SPBC16G5.07c</name>
</gene>
<proteinExistence type="inferred from homology"/>
<protein>
    <recommendedName>
        <fullName>Uncharacterized protein C16G5.07c</fullName>
    </recommendedName>
</protein>
<comment type="subcellular location">
    <subcellularLocation>
        <location evidence="1">Mitochondrion</location>
    </subcellularLocation>
</comment>
<comment type="similarity">
    <text evidence="2">Belongs to the band 7/mec-2 family.</text>
</comment>
<organism>
    <name type="scientific">Schizosaccharomyces pombe (strain 972 / ATCC 24843)</name>
    <name type="common">Fission yeast</name>
    <dbReference type="NCBI Taxonomy" id="284812"/>
    <lineage>
        <taxon>Eukaryota</taxon>
        <taxon>Fungi</taxon>
        <taxon>Dikarya</taxon>
        <taxon>Ascomycota</taxon>
        <taxon>Taphrinomycotina</taxon>
        <taxon>Schizosaccharomycetes</taxon>
        <taxon>Schizosaccharomycetales</taxon>
        <taxon>Schizosaccharomycetaceae</taxon>
        <taxon>Schizosaccharomyces</taxon>
    </lineage>
</organism>